<dbReference type="EMBL" id="CP000142">
    <property type="protein sequence ID" value="ABA87977.1"/>
    <property type="molecule type" value="Genomic_DNA"/>
</dbReference>
<dbReference type="RefSeq" id="WP_011340420.1">
    <property type="nucleotide sequence ID" value="NC_007498.2"/>
</dbReference>
<dbReference type="SMR" id="Q3A6N0"/>
<dbReference type="STRING" id="338963.Pcar_0718"/>
<dbReference type="KEGG" id="pca:Pcar_0718"/>
<dbReference type="eggNOG" id="COG0098">
    <property type="taxonomic scope" value="Bacteria"/>
</dbReference>
<dbReference type="HOGENOM" id="CLU_065898_2_2_7"/>
<dbReference type="OrthoDB" id="9809045at2"/>
<dbReference type="Proteomes" id="UP000002534">
    <property type="component" value="Chromosome"/>
</dbReference>
<dbReference type="GO" id="GO:0015935">
    <property type="term" value="C:small ribosomal subunit"/>
    <property type="evidence" value="ECO:0007669"/>
    <property type="project" value="InterPro"/>
</dbReference>
<dbReference type="GO" id="GO:0019843">
    <property type="term" value="F:rRNA binding"/>
    <property type="evidence" value="ECO:0007669"/>
    <property type="project" value="UniProtKB-UniRule"/>
</dbReference>
<dbReference type="GO" id="GO:0003735">
    <property type="term" value="F:structural constituent of ribosome"/>
    <property type="evidence" value="ECO:0007669"/>
    <property type="project" value="InterPro"/>
</dbReference>
<dbReference type="GO" id="GO:0006412">
    <property type="term" value="P:translation"/>
    <property type="evidence" value="ECO:0007669"/>
    <property type="project" value="UniProtKB-UniRule"/>
</dbReference>
<dbReference type="FunFam" id="3.30.160.20:FF:000001">
    <property type="entry name" value="30S ribosomal protein S5"/>
    <property type="match status" value="1"/>
</dbReference>
<dbReference type="FunFam" id="3.30.230.10:FF:000002">
    <property type="entry name" value="30S ribosomal protein S5"/>
    <property type="match status" value="1"/>
</dbReference>
<dbReference type="Gene3D" id="3.30.160.20">
    <property type="match status" value="1"/>
</dbReference>
<dbReference type="Gene3D" id="3.30.230.10">
    <property type="match status" value="1"/>
</dbReference>
<dbReference type="HAMAP" id="MF_01307_B">
    <property type="entry name" value="Ribosomal_uS5_B"/>
    <property type="match status" value="1"/>
</dbReference>
<dbReference type="InterPro" id="IPR020568">
    <property type="entry name" value="Ribosomal_Su5_D2-typ_SF"/>
</dbReference>
<dbReference type="InterPro" id="IPR000851">
    <property type="entry name" value="Ribosomal_uS5"/>
</dbReference>
<dbReference type="InterPro" id="IPR005712">
    <property type="entry name" value="Ribosomal_uS5_bac-type"/>
</dbReference>
<dbReference type="InterPro" id="IPR005324">
    <property type="entry name" value="Ribosomal_uS5_C"/>
</dbReference>
<dbReference type="InterPro" id="IPR013810">
    <property type="entry name" value="Ribosomal_uS5_N"/>
</dbReference>
<dbReference type="InterPro" id="IPR018192">
    <property type="entry name" value="Ribosomal_uS5_N_CS"/>
</dbReference>
<dbReference type="InterPro" id="IPR014721">
    <property type="entry name" value="Ribsml_uS5_D2-typ_fold_subgr"/>
</dbReference>
<dbReference type="NCBIfam" id="TIGR01021">
    <property type="entry name" value="rpsE_bact"/>
    <property type="match status" value="1"/>
</dbReference>
<dbReference type="PANTHER" id="PTHR48277">
    <property type="entry name" value="MITOCHONDRIAL RIBOSOMAL PROTEIN S5"/>
    <property type="match status" value="1"/>
</dbReference>
<dbReference type="PANTHER" id="PTHR48277:SF1">
    <property type="entry name" value="MITOCHONDRIAL RIBOSOMAL PROTEIN S5"/>
    <property type="match status" value="1"/>
</dbReference>
<dbReference type="Pfam" id="PF00333">
    <property type="entry name" value="Ribosomal_S5"/>
    <property type="match status" value="1"/>
</dbReference>
<dbReference type="Pfam" id="PF03719">
    <property type="entry name" value="Ribosomal_S5_C"/>
    <property type="match status" value="1"/>
</dbReference>
<dbReference type="SUPFAM" id="SSF54768">
    <property type="entry name" value="dsRNA-binding domain-like"/>
    <property type="match status" value="1"/>
</dbReference>
<dbReference type="SUPFAM" id="SSF54211">
    <property type="entry name" value="Ribosomal protein S5 domain 2-like"/>
    <property type="match status" value="1"/>
</dbReference>
<dbReference type="PROSITE" id="PS00585">
    <property type="entry name" value="RIBOSOMAL_S5"/>
    <property type="match status" value="1"/>
</dbReference>
<dbReference type="PROSITE" id="PS50881">
    <property type="entry name" value="S5_DSRBD"/>
    <property type="match status" value="1"/>
</dbReference>
<gene>
    <name evidence="1" type="primary">rpsE</name>
    <name type="ordered locus">Pcar_0718</name>
</gene>
<sequence length="163" mass="17257">MLRIDPNELELTDRVVHINRCAKVVKGGRRFSFSALVVVGDGQGIVGYGHGKAKEVPEAIRKGVEQAKKNLIRVPLKDRSIPFDVIGKFGAGRVLLKPASAGTGVIAGGAVRAVLEVSGVGDILSKCIGSNNPHNVVRATIDALSRLKSAEELRALRGADTEE</sequence>
<organism>
    <name type="scientific">Syntrophotalea carbinolica (strain DSM 2380 / NBRC 103641 / GraBd1)</name>
    <name type="common">Pelobacter carbinolicus</name>
    <dbReference type="NCBI Taxonomy" id="338963"/>
    <lineage>
        <taxon>Bacteria</taxon>
        <taxon>Pseudomonadati</taxon>
        <taxon>Thermodesulfobacteriota</taxon>
        <taxon>Desulfuromonadia</taxon>
        <taxon>Desulfuromonadales</taxon>
        <taxon>Syntrophotaleaceae</taxon>
        <taxon>Syntrophotalea</taxon>
    </lineage>
</organism>
<accession>Q3A6N0</accession>
<reference key="1">
    <citation type="submission" date="2005-10" db="EMBL/GenBank/DDBJ databases">
        <title>Complete sequence of Pelobacter carbinolicus DSM 2380.</title>
        <authorList>
            <person name="Copeland A."/>
            <person name="Lucas S."/>
            <person name="Lapidus A."/>
            <person name="Barry K."/>
            <person name="Detter J.C."/>
            <person name="Glavina T."/>
            <person name="Hammon N."/>
            <person name="Israni S."/>
            <person name="Pitluck S."/>
            <person name="Chertkov O."/>
            <person name="Schmutz J."/>
            <person name="Larimer F."/>
            <person name="Land M."/>
            <person name="Kyrpides N."/>
            <person name="Ivanova N."/>
            <person name="Richardson P."/>
        </authorList>
    </citation>
    <scope>NUCLEOTIDE SEQUENCE [LARGE SCALE GENOMIC DNA]</scope>
    <source>
        <strain>DSM 2380 / NBRC 103641 / GraBd1</strain>
    </source>
</reference>
<feature type="chain" id="PRO_0000230355" description="Small ribosomal subunit protein uS5">
    <location>
        <begin position="1"/>
        <end position="163"/>
    </location>
</feature>
<feature type="domain" description="S5 DRBM" evidence="1">
    <location>
        <begin position="11"/>
        <end position="74"/>
    </location>
</feature>
<keyword id="KW-1185">Reference proteome</keyword>
<keyword id="KW-0687">Ribonucleoprotein</keyword>
<keyword id="KW-0689">Ribosomal protein</keyword>
<keyword id="KW-0694">RNA-binding</keyword>
<keyword id="KW-0699">rRNA-binding</keyword>
<protein>
    <recommendedName>
        <fullName evidence="1">Small ribosomal subunit protein uS5</fullName>
    </recommendedName>
    <alternativeName>
        <fullName evidence="2">30S ribosomal protein S5</fullName>
    </alternativeName>
</protein>
<name>RS5_SYNC1</name>
<comment type="function">
    <text evidence="1">With S4 and S12 plays an important role in translational accuracy.</text>
</comment>
<comment type="function">
    <text evidence="1">Located at the back of the 30S subunit body where it stabilizes the conformation of the head with respect to the body.</text>
</comment>
<comment type="subunit">
    <text evidence="1">Part of the 30S ribosomal subunit. Contacts proteins S4 and S8.</text>
</comment>
<comment type="domain">
    <text>The N-terminal domain interacts with the head of the 30S subunit; the C-terminal domain interacts with the body and contacts protein S4. The interaction surface between S4 and S5 is involved in control of translational fidelity.</text>
</comment>
<comment type="similarity">
    <text evidence="1">Belongs to the universal ribosomal protein uS5 family.</text>
</comment>
<proteinExistence type="inferred from homology"/>
<evidence type="ECO:0000255" key="1">
    <source>
        <dbReference type="HAMAP-Rule" id="MF_01307"/>
    </source>
</evidence>
<evidence type="ECO:0000305" key="2"/>